<feature type="chain" id="PRO_1000124041" description="4-hydroxy-tetrahydrodipicolinate synthase">
    <location>
        <begin position="1"/>
        <end position="300"/>
    </location>
</feature>
<feature type="active site" description="Proton donor/acceptor" evidence="1">
    <location>
        <position position="140"/>
    </location>
</feature>
<feature type="active site" description="Schiff-base intermediate with substrate" evidence="1">
    <location>
        <position position="169"/>
    </location>
</feature>
<feature type="binding site" evidence="1">
    <location>
        <position position="45"/>
    </location>
    <ligand>
        <name>pyruvate</name>
        <dbReference type="ChEBI" id="CHEBI:15361"/>
    </ligand>
</feature>
<feature type="binding site" evidence="1">
    <location>
        <position position="210"/>
    </location>
    <ligand>
        <name>pyruvate</name>
        <dbReference type="ChEBI" id="CHEBI:15361"/>
    </ligand>
</feature>
<feature type="site" description="Part of a proton relay during catalysis" evidence="1">
    <location>
        <position position="44"/>
    </location>
</feature>
<feature type="site" description="Part of a proton relay during catalysis" evidence="1">
    <location>
        <position position="114"/>
    </location>
</feature>
<accession>B5Z6I0</accession>
<sequence>MQFHSSSALITPFKKDLSVDEAAYESLIKRQIFQGMDACVPVGTTGESATLTHKEHMRCIEIAIETCKNTKTLSNSRMKVLAGVGSNATSESLSLAKFAQKIGADAILCVSPYYNRPTQQGLFEHYKTIAQSVEIPVMLYDVPSRTGVSIEISTALKLFREVPNIKAIKEASGSLKRVTELHYHEKDFKIFSGEDSLNHSIMFSGGCGVISVTGNLMPNLISQMVNCALKLEYQQALEIQNKLFHLHQALFVETNPIPIKMAMHLAGLIENPSYRLPLVAPSKETIQLLEKTLQQYEVIA</sequence>
<dbReference type="EC" id="4.3.3.7" evidence="1"/>
<dbReference type="EMBL" id="CP001173">
    <property type="protein sequence ID" value="ACI27179.1"/>
    <property type="molecule type" value="Genomic_DNA"/>
</dbReference>
<dbReference type="RefSeq" id="WP_001159508.1">
    <property type="nucleotide sequence ID" value="NC_011333.1"/>
</dbReference>
<dbReference type="SMR" id="B5Z6I0"/>
<dbReference type="KEGG" id="hpg:HPG27_415"/>
<dbReference type="HOGENOM" id="CLU_049343_7_0_7"/>
<dbReference type="UniPathway" id="UPA00034">
    <property type="reaction ID" value="UER00017"/>
</dbReference>
<dbReference type="Proteomes" id="UP000001735">
    <property type="component" value="Chromosome"/>
</dbReference>
<dbReference type="GO" id="GO:0005829">
    <property type="term" value="C:cytosol"/>
    <property type="evidence" value="ECO:0007669"/>
    <property type="project" value="TreeGrafter"/>
</dbReference>
<dbReference type="GO" id="GO:0008840">
    <property type="term" value="F:4-hydroxy-tetrahydrodipicolinate synthase activity"/>
    <property type="evidence" value="ECO:0007669"/>
    <property type="project" value="UniProtKB-UniRule"/>
</dbReference>
<dbReference type="GO" id="GO:0019877">
    <property type="term" value="P:diaminopimelate biosynthetic process"/>
    <property type="evidence" value="ECO:0007669"/>
    <property type="project" value="UniProtKB-UniRule"/>
</dbReference>
<dbReference type="GO" id="GO:0009089">
    <property type="term" value="P:lysine biosynthetic process via diaminopimelate"/>
    <property type="evidence" value="ECO:0007669"/>
    <property type="project" value="UniProtKB-UniRule"/>
</dbReference>
<dbReference type="CDD" id="cd00950">
    <property type="entry name" value="DHDPS"/>
    <property type="match status" value="1"/>
</dbReference>
<dbReference type="Gene3D" id="3.20.20.70">
    <property type="entry name" value="Aldolase class I"/>
    <property type="match status" value="1"/>
</dbReference>
<dbReference type="HAMAP" id="MF_00418">
    <property type="entry name" value="DapA"/>
    <property type="match status" value="1"/>
</dbReference>
<dbReference type="InterPro" id="IPR013785">
    <property type="entry name" value="Aldolase_TIM"/>
</dbReference>
<dbReference type="InterPro" id="IPR005263">
    <property type="entry name" value="DapA"/>
</dbReference>
<dbReference type="InterPro" id="IPR002220">
    <property type="entry name" value="DapA-like"/>
</dbReference>
<dbReference type="InterPro" id="IPR020625">
    <property type="entry name" value="Schiff_base-form_aldolases_AS"/>
</dbReference>
<dbReference type="NCBIfam" id="TIGR00674">
    <property type="entry name" value="dapA"/>
    <property type="match status" value="1"/>
</dbReference>
<dbReference type="PANTHER" id="PTHR12128:SF66">
    <property type="entry name" value="4-HYDROXY-2-OXOGLUTARATE ALDOLASE, MITOCHONDRIAL"/>
    <property type="match status" value="1"/>
</dbReference>
<dbReference type="PANTHER" id="PTHR12128">
    <property type="entry name" value="DIHYDRODIPICOLINATE SYNTHASE"/>
    <property type="match status" value="1"/>
</dbReference>
<dbReference type="Pfam" id="PF00701">
    <property type="entry name" value="DHDPS"/>
    <property type="match status" value="1"/>
</dbReference>
<dbReference type="PIRSF" id="PIRSF001365">
    <property type="entry name" value="DHDPS"/>
    <property type="match status" value="1"/>
</dbReference>
<dbReference type="PRINTS" id="PR00146">
    <property type="entry name" value="DHPICSNTHASE"/>
</dbReference>
<dbReference type="SMART" id="SM01130">
    <property type="entry name" value="DHDPS"/>
    <property type="match status" value="1"/>
</dbReference>
<dbReference type="SUPFAM" id="SSF51569">
    <property type="entry name" value="Aldolase"/>
    <property type="match status" value="1"/>
</dbReference>
<dbReference type="PROSITE" id="PS00666">
    <property type="entry name" value="DHDPS_2"/>
    <property type="match status" value="1"/>
</dbReference>
<evidence type="ECO:0000255" key="1">
    <source>
        <dbReference type="HAMAP-Rule" id="MF_00418"/>
    </source>
</evidence>
<evidence type="ECO:0000305" key="2"/>
<reference key="1">
    <citation type="journal article" date="2009" name="J. Bacteriol.">
        <title>The complete genome sequence of Helicobacter pylori strain G27.</title>
        <authorList>
            <person name="Baltrus D.A."/>
            <person name="Amieva M.R."/>
            <person name="Covacci A."/>
            <person name="Lowe T.M."/>
            <person name="Merrell D.S."/>
            <person name="Ottemann K.M."/>
            <person name="Stein M."/>
            <person name="Salama N.R."/>
            <person name="Guillemin K."/>
        </authorList>
    </citation>
    <scope>NUCLEOTIDE SEQUENCE [LARGE SCALE GENOMIC DNA]</scope>
    <source>
        <strain>G27</strain>
    </source>
</reference>
<keyword id="KW-0028">Amino-acid biosynthesis</keyword>
<keyword id="KW-0963">Cytoplasm</keyword>
<keyword id="KW-0220">Diaminopimelate biosynthesis</keyword>
<keyword id="KW-0456">Lyase</keyword>
<keyword id="KW-0457">Lysine biosynthesis</keyword>
<keyword id="KW-1185">Reference proteome</keyword>
<keyword id="KW-0704">Schiff base</keyword>
<name>DAPA_HELPG</name>
<proteinExistence type="inferred from homology"/>
<organism>
    <name type="scientific">Helicobacter pylori (strain G27)</name>
    <dbReference type="NCBI Taxonomy" id="563041"/>
    <lineage>
        <taxon>Bacteria</taxon>
        <taxon>Pseudomonadati</taxon>
        <taxon>Campylobacterota</taxon>
        <taxon>Epsilonproteobacteria</taxon>
        <taxon>Campylobacterales</taxon>
        <taxon>Helicobacteraceae</taxon>
        <taxon>Helicobacter</taxon>
    </lineage>
</organism>
<gene>
    <name evidence="1" type="primary">dapA</name>
    <name type="ordered locus">HPG27_415</name>
</gene>
<comment type="function">
    <text evidence="1">Catalyzes the condensation of (S)-aspartate-beta-semialdehyde [(S)-ASA] and pyruvate to 4-hydroxy-tetrahydrodipicolinate (HTPA).</text>
</comment>
<comment type="catalytic activity">
    <reaction evidence="1">
        <text>L-aspartate 4-semialdehyde + pyruvate = (2S,4S)-4-hydroxy-2,3,4,5-tetrahydrodipicolinate + H2O + H(+)</text>
        <dbReference type="Rhea" id="RHEA:34171"/>
        <dbReference type="ChEBI" id="CHEBI:15361"/>
        <dbReference type="ChEBI" id="CHEBI:15377"/>
        <dbReference type="ChEBI" id="CHEBI:15378"/>
        <dbReference type="ChEBI" id="CHEBI:67139"/>
        <dbReference type="ChEBI" id="CHEBI:537519"/>
        <dbReference type="EC" id="4.3.3.7"/>
    </reaction>
</comment>
<comment type="pathway">
    <text evidence="1">Amino-acid biosynthesis; L-lysine biosynthesis via DAP pathway; (S)-tetrahydrodipicolinate from L-aspartate: step 3/4.</text>
</comment>
<comment type="subunit">
    <text evidence="1">Homotetramer; dimer of dimers.</text>
</comment>
<comment type="subcellular location">
    <subcellularLocation>
        <location evidence="1">Cytoplasm</location>
    </subcellularLocation>
</comment>
<comment type="similarity">
    <text evidence="1">Belongs to the DapA family.</text>
</comment>
<comment type="caution">
    <text evidence="2">Was originally thought to be a dihydrodipicolinate synthase (DHDPS), catalyzing the condensation of (S)-aspartate-beta-semialdehyde [(S)-ASA] and pyruvate to dihydrodipicolinate (DHDP). However, it was shown in E.coli that the product of the enzymatic reaction is not dihydrodipicolinate but in fact (4S)-4-hydroxy-2,3,4,5-tetrahydro-(2S)-dipicolinic acid (HTPA), and that the consecutive dehydration reaction leading to DHDP is not spontaneous but catalyzed by DapB.</text>
</comment>
<protein>
    <recommendedName>
        <fullName evidence="1">4-hydroxy-tetrahydrodipicolinate synthase</fullName>
        <shortName evidence="1">HTPA synthase</shortName>
        <ecNumber evidence="1">4.3.3.7</ecNumber>
    </recommendedName>
</protein>